<sequence>MSKPGRTILASKVAETFNTEIINNVEEYKKTHNGQGPLLVGFLANNDPAAKMYATWTQKTSESMGFRYDLRVIEDKDFLEEAIIQANGDDSVNGIMVYFPVFGNAQDQYLQQVVCKEKDVEGLNHVYYQNLYHNVRYLDKENRLKSILPCTPLAIVKILEFLKIYNNLLPEGNRLYGKKCIVINRSEIVGRPLAALLANDGATVYSVDVNNIQKFTRGESLKLNKHHVEDLGEYSEDLLKKCSLDSDVVITGVPSENYKFPTEYIKEGAVCINFACTKNFSDDVKEKASLYVPMTGKVTIAMLLRNMLRLVRNVELSKEK</sequence>
<reference key="1">
    <citation type="journal article" date="1993" name="J. Biol. Chem.">
        <title>Cloning and characterization of the Saccharomyces cerevisiae gene encoding NAD-dependent 5,10-methylenetetrahydrofolate dehydrogenase.</title>
        <authorList>
            <person name="West M.G."/>
            <person name="Barlowe C.K."/>
            <person name="Appling D.R."/>
        </authorList>
    </citation>
    <scope>NUCLEOTIDE SEQUENCE [GENOMIC DNA]</scope>
    <scope>PROTEIN SEQUENCE OF 72-86 AND 146-160</scope>
    <scope>CATALYTIC ACTIVITY</scope>
</reference>
<reference key="2">
    <citation type="journal article" date="1994" name="Nature">
        <title>Complete DNA sequence of yeast chromosome XI.</title>
        <authorList>
            <person name="Dujon B."/>
            <person name="Alexandraki D."/>
            <person name="Andre B."/>
            <person name="Ansorge W."/>
            <person name="Baladron V."/>
            <person name="Ballesta J.P.G."/>
            <person name="Banrevi A."/>
            <person name="Bolle P.-A."/>
            <person name="Bolotin-Fukuhara M."/>
            <person name="Bossier P."/>
            <person name="Bou G."/>
            <person name="Boyer J."/>
            <person name="Buitrago M.J."/>
            <person name="Cheret G."/>
            <person name="Colleaux L."/>
            <person name="Daignan-Fornier B."/>
            <person name="del Rey F."/>
            <person name="Dion C."/>
            <person name="Domdey H."/>
            <person name="Duesterhoeft A."/>
            <person name="Duesterhus S."/>
            <person name="Entian K.-D."/>
            <person name="Erfle H."/>
            <person name="Esteban P.F."/>
            <person name="Feldmann H."/>
            <person name="Fernandes L."/>
            <person name="Fobo G.M."/>
            <person name="Fritz C."/>
            <person name="Fukuhara H."/>
            <person name="Gabel C."/>
            <person name="Gaillon L."/>
            <person name="Garcia-Cantalejo J.M."/>
            <person name="Garcia-Ramirez J.J."/>
            <person name="Gent M.E."/>
            <person name="Ghazvini M."/>
            <person name="Goffeau A."/>
            <person name="Gonzalez A."/>
            <person name="Grothues D."/>
            <person name="Guerreiro P."/>
            <person name="Hegemann J.H."/>
            <person name="Hewitt N."/>
            <person name="Hilger F."/>
            <person name="Hollenberg C.P."/>
            <person name="Horaitis O."/>
            <person name="Indge K.J."/>
            <person name="Jacquier A."/>
            <person name="James C.M."/>
            <person name="Jauniaux J.-C."/>
            <person name="Jimenez A."/>
            <person name="Keuchel H."/>
            <person name="Kirchrath L."/>
            <person name="Kleine K."/>
            <person name="Koetter P."/>
            <person name="Legrain P."/>
            <person name="Liebl S."/>
            <person name="Louis E.J."/>
            <person name="Maia e Silva A."/>
            <person name="Marck C."/>
            <person name="Monnier A.-L."/>
            <person name="Moestl D."/>
            <person name="Mueller S."/>
            <person name="Obermaier B."/>
            <person name="Oliver S.G."/>
            <person name="Pallier C."/>
            <person name="Pascolo S."/>
            <person name="Pfeiffer F."/>
            <person name="Philippsen P."/>
            <person name="Planta R.J."/>
            <person name="Pohl F.M."/>
            <person name="Pohl T.M."/>
            <person name="Poehlmann R."/>
            <person name="Portetelle D."/>
            <person name="Purnelle B."/>
            <person name="Puzos V."/>
            <person name="Ramezani Rad M."/>
            <person name="Rasmussen S.W."/>
            <person name="Remacha M.A."/>
            <person name="Revuelta J.L."/>
            <person name="Richard G.-F."/>
            <person name="Rieger M."/>
            <person name="Rodrigues-Pousada C."/>
            <person name="Rose M."/>
            <person name="Rupp T."/>
            <person name="Santos M.A."/>
            <person name="Schwager C."/>
            <person name="Sensen C."/>
            <person name="Skala J."/>
            <person name="Soares H."/>
            <person name="Sor F."/>
            <person name="Stegemann J."/>
            <person name="Tettelin H."/>
            <person name="Thierry A."/>
            <person name="Tzermia M."/>
            <person name="Urrestarazu L.A."/>
            <person name="van Dyck L."/>
            <person name="van Vliet-Reedijk J.C."/>
            <person name="Valens M."/>
            <person name="Vandenbol M."/>
            <person name="Vilela C."/>
            <person name="Vissers S."/>
            <person name="von Wettstein D."/>
            <person name="Voss H."/>
            <person name="Wiemann S."/>
            <person name="Xu G."/>
            <person name="Zimmermann J."/>
            <person name="Haasemann M."/>
            <person name="Becker I."/>
            <person name="Mewes H.-W."/>
        </authorList>
    </citation>
    <scope>NUCLEOTIDE SEQUENCE [LARGE SCALE GENOMIC DNA]</scope>
    <source>
        <strain>ATCC 204508 / S288c</strain>
    </source>
</reference>
<reference key="3">
    <citation type="journal article" date="2014" name="G3 (Bethesda)">
        <title>The reference genome sequence of Saccharomyces cerevisiae: Then and now.</title>
        <authorList>
            <person name="Engel S.R."/>
            <person name="Dietrich F.S."/>
            <person name="Fisk D.G."/>
            <person name="Binkley G."/>
            <person name="Balakrishnan R."/>
            <person name="Costanzo M.C."/>
            <person name="Dwight S.S."/>
            <person name="Hitz B.C."/>
            <person name="Karra K."/>
            <person name="Nash R.S."/>
            <person name="Weng S."/>
            <person name="Wong E.D."/>
            <person name="Lloyd P."/>
            <person name="Skrzypek M.S."/>
            <person name="Miyasato S.R."/>
            <person name="Simison M."/>
            <person name="Cherry J.M."/>
        </authorList>
    </citation>
    <scope>GENOME REANNOTATION</scope>
    <source>
        <strain>ATCC 204508 / S288c</strain>
    </source>
</reference>
<reference key="4">
    <citation type="journal article" date="1994" name="Yeast">
        <title>The complete sequence of an 18,002 bp segment of Saccharomyces cerevisiae chromosome XI contains the HBS1, MRP-L20 and PRP16 genes, and six new open reading frames.</title>
        <authorList>
            <person name="Garcia-Cantalejo J.M."/>
            <person name="Baladron V."/>
            <person name="Esteban P.F."/>
            <person name="Santos M.A."/>
            <person name="Bou G."/>
            <person name="Remacha M.A."/>
            <person name="Revuelta J.L."/>
            <person name="Ballesta J.P.G."/>
            <person name="Jimenez A."/>
            <person name="del Rey F."/>
        </authorList>
    </citation>
    <scope>NUCLEOTIDE SEQUENCE [GENOMIC DNA] OF 1-161</scope>
</reference>
<reference key="5">
    <citation type="journal article" date="1990" name="Biochemistry">
        <title>Isolation and characterization of a novel eukaryotic monofunctional NAD(+)-dependent 5,10-methylenetetrahydrofolate dehydrogenase.</title>
        <authorList>
            <person name="Barlowe C.K."/>
            <person name="Appling D.R."/>
        </authorList>
    </citation>
    <scope>IDENTIFICATION OF PROTEIN</scope>
</reference>
<reference key="6">
    <citation type="journal article" date="2003" name="Nature">
        <title>Global analysis of protein localization in budding yeast.</title>
        <authorList>
            <person name="Huh W.-K."/>
            <person name="Falvo J.V."/>
            <person name="Gerke L.C."/>
            <person name="Carroll A.S."/>
            <person name="Howson R.W."/>
            <person name="Weissman J.S."/>
            <person name="O'Shea E.K."/>
        </authorList>
    </citation>
    <scope>SUBCELLULAR LOCATION [LARGE SCALE ANALYSIS]</scope>
</reference>
<reference key="7">
    <citation type="journal article" date="2003" name="Nature">
        <title>Global analysis of protein expression in yeast.</title>
        <authorList>
            <person name="Ghaemmaghami S."/>
            <person name="Huh W.-K."/>
            <person name="Bower K."/>
            <person name="Howson R.W."/>
            <person name="Belle A."/>
            <person name="Dephoure N."/>
            <person name="O'Shea E.K."/>
            <person name="Weissman J.S."/>
        </authorList>
    </citation>
    <scope>LEVEL OF PROTEIN EXPRESSION [LARGE SCALE ANALYSIS]</scope>
</reference>
<reference key="8">
    <citation type="journal article" date="2000" name="Protein Sci.">
        <title>The X-ray structure of the NAD-dependent 5,10-methylenetetrahydrofolate dehydrogenase from Saccharomyces cerevisiae.</title>
        <authorList>
            <person name="Monzingo A.F."/>
            <person name="Breksa A."/>
            <person name="Ernst S."/>
            <person name="Appling D.R."/>
            <person name="Robertus J.D."/>
        </authorList>
    </citation>
    <scope>X-RAY CRYSTALLOGRAPHY (2.8 ANGSTROMS) IN COMPLEX WITH NAD</scope>
    <scope>SUBUNIT</scope>
</reference>
<proteinExistence type="evidence at protein level"/>
<feature type="chain" id="PRO_0000199319" description="Methylenetetrahydrofolate dehydrogenase [NAD(+)]">
    <location>
        <begin position="1"/>
        <end position="320"/>
    </location>
</feature>
<feature type="active site" evidence="1">
    <location>
        <position position="150"/>
    </location>
</feature>
<feature type="binding site" evidence="2">
    <location>
        <begin position="185"/>
        <end position="186"/>
    </location>
    <ligand>
        <name>NAD(+)</name>
        <dbReference type="ChEBI" id="CHEBI:57540"/>
    </ligand>
</feature>
<feature type="binding site" evidence="2">
    <location>
        <begin position="208"/>
        <end position="209"/>
    </location>
    <ligand>
        <name>NAD(+)</name>
        <dbReference type="ChEBI" id="CHEBI:57540"/>
    </ligand>
</feature>
<feature type="binding site" evidence="2">
    <location>
        <begin position="274"/>
        <end position="276"/>
    </location>
    <ligand>
        <name>NAD(+)</name>
        <dbReference type="ChEBI" id="CHEBI:57540"/>
    </ligand>
</feature>
<feature type="helix" evidence="8">
    <location>
        <begin position="10"/>
        <end position="31"/>
    </location>
</feature>
<feature type="turn" evidence="8">
    <location>
        <begin position="32"/>
        <end position="34"/>
    </location>
</feature>
<feature type="strand" evidence="8">
    <location>
        <begin position="38"/>
        <end position="43"/>
    </location>
</feature>
<feature type="helix" evidence="8">
    <location>
        <begin position="48"/>
        <end position="63"/>
    </location>
</feature>
<feature type="strand" evidence="8">
    <location>
        <begin position="67"/>
        <end position="72"/>
    </location>
</feature>
<feature type="helix" evidence="8">
    <location>
        <begin position="76"/>
        <end position="78"/>
    </location>
</feature>
<feature type="helix" evidence="8">
    <location>
        <begin position="79"/>
        <end position="88"/>
    </location>
</feature>
<feature type="strand" evidence="8">
    <location>
        <begin position="94"/>
        <end position="97"/>
    </location>
</feature>
<feature type="strand" evidence="8">
    <location>
        <begin position="101"/>
        <end position="104"/>
    </location>
</feature>
<feature type="helix" evidence="8">
    <location>
        <begin position="105"/>
        <end position="110"/>
    </location>
</feature>
<feature type="turn" evidence="8">
    <location>
        <begin position="111"/>
        <end position="113"/>
    </location>
</feature>
<feature type="turn" evidence="8">
    <location>
        <begin position="116"/>
        <end position="118"/>
    </location>
</feature>
<feature type="strand" evidence="9">
    <location>
        <begin position="119"/>
        <end position="121"/>
    </location>
</feature>
<feature type="helix" evidence="8">
    <location>
        <begin position="125"/>
        <end position="132"/>
    </location>
</feature>
<feature type="strand" evidence="8">
    <location>
        <begin position="137"/>
        <end position="142"/>
    </location>
</feature>
<feature type="helix" evidence="8">
    <location>
        <begin position="150"/>
        <end position="161"/>
    </location>
</feature>
<feature type="turn" evidence="8">
    <location>
        <begin position="174"/>
        <end position="177"/>
    </location>
</feature>
<feature type="strand" evidence="8">
    <location>
        <begin position="179"/>
        <end position="183"/>
    </location>
</feature>
<feature type="turn" evidence="8">
    <location>
        <begin position="187"/>
        <end position="189"/>
    </location>
</feature>
<feature type="helix" evidence="8">
    <location>
        <begin position="190"/>
        <end position="198"/>
    </location>
</feature>
<feature type="strand" evidence="8">
    <location>
        <begin position="203"/>
        <end position="207"/>
    </location>
</feature>
<feature type="strand" evidence="8">
    <location>
        <begin position="209"/>
        <end position="217"/>
    </location>
</feature>
<feature type="strand" evidence="8">
    <location>
        <begin position="227"/>
        <end position="233"/>
    </location>
</feature>
<feature type="helix" evidence="8">
    <location>
        <begin position="236"/>
        <end position="245"/>
    </location>
</feature>
<feature type="strand" evidence="8">
    <location>
        <begin position="247"/>
        <end position="251"/>
    </location>
</feature>
<feature type="turn" evidence="8">
    <location>
        <begin position="262"/>
        <end position="264"/>
    </location>
</feature>
<feature type="strand" evidence="8">
    <location>
        <begin position="269"/>
        <end position="273"/>
    </location>
</feature>
<feature type="strand" evidence="8">
    <location>
        <begin position="275"/>
        <end position="277"/>
    </location>
</feature>
<feature type="helix" evidence="8">
    <location>
        <begin position="282"/>
        <end position="285"/>
    </location>
</feature>
<feature type="strand" evidence="8">
    <location>
        <begin position="288"/>
        <end position="293"/>
    </location>
</feature>
<feature type="helix" evidence="8">
    <location>
        <begin position="296"/>
        <end position="316"/>
    </location>
</feature>
<keyword id="KW-0002">3D-structure</keyword>
<keyword id="KW-0963">Cytoplasm</keyword>
<keyword id="KW-0903">Direct protein sequencing</keyword>
<keyword id="KW-0520">NAD</keyword>
<keyword id="KW-0539">Nucleus</keyword>
<keyword id="KW-0554">One-carbon metabolism</keyword>
<keyword id="KW-0560">Oxidoreductase</keyword>
<keyword id="KW-0658">Purine biosynthesis</keyword>
<keyword id="KW-1185">Reference proteome</keyword>
<dbReference type="EC" id="1.5.1.15" evidence="5"/>
<dbReference type="EMBL" id="L02934">
    <property type="protein sequence ID" value="AAB00323.1"/>
    <property type="molecule type" value="Genomic_DNA"/>
</dbReference>
<dbReference type="EMBL" id="Z27116">
    <property type="protein sequence ID" value="CAA81631.1"/>
    <property type="molecule type" value="Genomic_DNA"/>
</dbReference>
<dbReference type="EMBL" id="Z28305">
    <property type="protein sequence ID" value="CAA82159.1"/>
    <property type="molecule type" value="Genomic_DNA"/>
</dbReference>
<dbReference type="EMBL" id="BK006944">
    <property type="protein sequence ID" value="DAA09230.1"/>
    <property type="molecule type" value="Genomic_DNA"/>
</dbReference>
<dbReference type="PIR" id="S31254">
    <property type="entry name" value="S31254"/>
</dbReference>
<dbReference type="RefSeq" id="NP_013006.3">
    <property type="nucleotide sequence ID" value="NM_001179870.3"/>
</dbReference>
<dbReference type="PDB" id="1EDZ">
    <property type="method" value="X-ray"/>
    <property type="resolution" value="2.80 A"/>
    <property type="chains" value="A=1-320"/>
</dbReference>
<dbReference type="PDB" id="1EE9">
    <property type="method" value="X-ray"/>
    <property type="resolution" value="3.00 A"/>
    <property type="chains" value="A=1-320"/>
</dbReference>
<dbReference type="PDBsum" id="1EDZ"/>
<dbReference type="PDBsum" id="1EE9"/>
<dbReference type="SMR" id="Q02046"/>
<dbReference type="BioGRID" id="34211">
    <property type="interactions" value="50"/>
</dbReference>
<dbReference type="DIP" id="DIP-730N"/>
<dbReference type="FunCoup" id="Q02046">
    <property type="interactions" value="361"/>
</dbReference>
<dbReference type="IntAct" id="Q02046">
    <property type="interactions" value="10"/>
</dbReference>
<dbReference type="MINT" id="Q02046"/>
<dbReference type="STRING" id="4932.YKR080W"/>
<dbReference type="iPTMnet" id="Q02046"/>
<dbReference type="PaxDb" id="4932-YKR080W"/>
<dbReference type="PeptideAtlas" id="Q02046"/>
<dbReference type="EnsemblFungi" id="YKR080W_mRNA">
    <property type="protein sequence ID" value="YKR080W"/>
    <property type="gene ID" value="YKR080W"/>
</dbReference>
<dbReference type="GeneID" id="853955"/>
<dbReference type="KEGG" id="sce:YKR080W"/>
<dbReference type="AGR" id="SGD:S000001788"/>
<dbReference type="SGD" id="S000001788">
    <property type="gene designation" value="MTD1"/>
</dbReference>
<dbReference type="VEuPathDB" id="FungiDB:YKR080W"/>
<dbReference type="eggNOG" id="KOG0089">
    <property type="taxonomic scope" value="Eukaryota"/>
</dbReference>
<dbReference type="HOGENOM" id="CLU_031413_0_0_1"/>
<dbReference type="InParanoid" id="Q02046"/>
<dbReference type="OMA" id="CKVITAE"/>
<dbReference type="OrthoDB" id="41403at2759"/>
<dbReference type="BioCyc" id="YEAST:YKR080W-MONOMER"/>
<dbReference type="SABIO-RK" id="Q02046"/>
<dbReference type="BioGRID-ORCS" id="853955">
    <property type="hits" value="0 hits in 10 CRISPR screens"/>
</dbReference>
<dbReference type="EvolutionaryTrace" id="Q02046"/>
<dbReference type="PRO" id="PR:Q02046"/>
<dbReference type="Proteomes" id="UP000002311">
    <property type="component" value="Chromosome XI"/>
</dbReference>
<dbReference type="RNAct" id="Q02046">
    <property type="molecule type" value="protein"/>
</dbReference>
<dbReference type="GO" id="GO:0005829">
    <property type="term" value="C:cytosol"/>
    <property type="evidence" value="ECO:0000314"/>
    <property type="project" value="SGD"/>
</dbReference>
<dbReference type="GO" id="GO:0005634">
    <property type="term" value="C:nucleus"/>
    <property type="evidence" value="ECO:0007669"/>
    <property type="project" value="UniProtKB-SubCell"/>
</dbReference>
<dbReference type="GO" id="GO:0004487">
    <property type="term" value="F:methylenetetrahydrofolate dehydrogenase (NAD+) activity"/>
    <property type="evidence" value="ECO:0000315"/>
    <property type="project" value="SGD"/>
</dbReference>
<dbReference type="GO" id="GO:0004488">
    <property type="term" value="F:methylenetetrahydrofolate dehydrogenase (NADP+) activity"/>
    <property type="evidence" value="ECO:0007669"/>
    <property type="project" value="InterPro"/>
</dbReference>
<dbReference type="GO" id="GO:0009396">
    <property type="term" value="P:folic acid-containing compound biosynthetic process"/>
    <property type="evidence" value="ECO:0000315"/>
    <property type="project" value="SGD"/>
</dbReference>
<dbReference type="GO" id="GO:0006730">
    <property type="term" value="P:one-carbon metabolic process"/>
    <property type="evidence" value="ECO:0000314"/>
    <property type="project" value="SGD"/>
</dbReference>
<dbReference type="GO" id="GO:0009113">
    <property type="term" value="P:purine nucleobase biosynthetic process"/>
    <property type="evidence" value="ECO:0000314"/>
    <property type="project" value="SGD"/>
</dbReference>
<dbReference type="GO" id="GO:0006164">
    <property type="term" value="P:purine nucleotide biosynthetic process"/>
    <property type="evidence" value="ECO:0007669"/>
    <property type="project" value="UniProtKB-KW"/>
</dbReference>
<dbReference type="CDD" id="cd01079">
    <property type="entry name" value="NAD_bind_m-THF_DH"/>
    <property type="match status" value="1"/>
</dbReference>
<dbReference type="FunFam" id="3.40.50.720:FF:000255">
    <property type="entry name" value="Methylenetetrahydrofolate dehydrogenase"/>
    <property type="match status" value="1"/>
</dbReference>
<dbReference type="FunFam" id="3.40.50.10860:FF:000012">
    <property type="entry name" value="Methylenetetrahydrofolate dehydrogenase [NAD(+)]"/>
    <property type="match status" value="1"/>
</dbReference>
<dbReference type="Gene3D" id="3.40.50.10860">
    <property type="entry name" value="Leucine Dehydrogenase, chain A, domain 1"/>
    <property type="match status" value="1"/>
</dbReference>
<dbReference type="Gene3D" id="3.40.50.720">
    <property type="entry name" value="NAD(P)-binding Rossmann-like Domain"/>
    <property type="match status" value="1"/>
</dbReference>
<dbReference type="InterPro" id="IPR046346">
    <property type="entry name" value="Aminoacid_DH-like_N_sf"/>
</dbReference>
<dbReference type="InterPro" id="IPR035812">
    <property type="entry name" value="m-THF_DH_NAD-bd"/>
</dbReference>
<dbReference type="InterPro" id="IPR036291">
    <property type="entry name" value="NAD(P)-bd_dom_sf"/>
</dbReference>
<dbReference type="InterPro" id="IPR000672">
    <property type="entry name" value="THF_DH/CycHdrlase"/>
</dbReference>
<dbReference type="InterPro" id="IPR020630">
    <property type="entry name" value="THF_DH/CycHdrlase_cat_dom"/>
</dbReference>
<dbReference type="InterPro" id="IPR020631">
    <property type="entry name" value="THF_DH/CycHdrlase_NAD-bd_dom"/>
</dbReference>
<dbReference type="PANTHER" id="PTHR48099">
    <property type="entry name" value="C-1-TETRAHYDROFOLATE SYNTHASE, CYTOPLASMIC-RELATED"/>
    <property type="match status" value="1"/>
</dbReference>
<dbReference type="PANTHER" id="PTHR48099:SF3">
    <property type="entry name" value="METHYLENETETRAHYDROFOLATE DEHYDROGENASE [NAD(+)]"/>
    <property type="match status" value="1"/>
</dbReference>
<dbReference type="Pfam" id="PF00763">
    <property type="entry name" value="THF_DHG_CYH"/>
    <property type="match status" value="1"/>
</dbReference>
<dbReference type="Pfam" id="PF02882">
    <property type="entry name" value="THF_DHG_CYH_C"/>
    <property type="match status" value="1"/>
</dbReference>
<dbReference type="PRINTS" id="PR00085">
    <property type="entry name" value="THFDHDRGNASE"/>
</dbReference>
<dbReference type="SUPFAM" id="SSF53223">
    <property type="entry name" value="Aminoacid dehydrogenase-like, N-terminal domain"/>
    <property type="match status" value="1"/>
</dbReference>
<dbReference type="SUPFAM" id="SSF51735">
    <property type="entry name" value="NAD(P)-binding Rossmann-fold domains"/>
    <property type="match status" value="1"/>
</dbReference>
<accession>Q02046</accession>
<accession>D6VXE0</accession>
<comment type="function">
    <text>Catalyzes oxidation of cytoplasmic one-carbon units for purine biosynthesis.</text>
</comment>
<comment type="catalytic activity">
    <reaction evidence="5">
        <text>(6R)-5,10-methylene-5,6,7,8-tetrahydrofolate + NAD(+) = (6R)-5,10-methenyltetrahydrofolate + NADH</text>
        <dbReference type="Rhea" id="RHEA:22892"/>
        <dbReference type="ChEBI" id="CHEBI:15636"/>
        <dbReference type="ChEBI" id="CHEBI:57455"/>
        <dbReference type="ChEBI" id="CHEBI:57540"/>
        <dbReference type="ChEBI" id="CHEBI:57945"/>
        <dbReference type="EC" id="1.5.1.15"/>
    </reaction>
    <physiologicalReaction direction="left-to-right" evidence="7">
        <dbReference type="Rhea" id="RHEA:22893"/>
    </physiologicalReaction>
</comment>
<comment type="subunit">
    <text evidence="2">Homodimer.</text>
</comment>
<comment type="subcellular location">
    <subcellularLocation>
        <location evidence="3">Cytoplasm</location>
    </subcellularLocation>
    <subcellularLocation>
        <location evidence="3">Nucleus</location>
    </subcellularLocation>
</comment>
<comment type="PTM">
    <text>The N-terminus is blocked.</text>
</comment>
<comment type="miscellaneous">
    <text evidence="4">Present with 16200 molecules/cell in log phase SD medium.</text>
</comment>
<comment type="similarity">
    <text evidence="6">Belongs to the tetrahydrofolate dehydrogenase/cyclohydrolase family.</text>
</comment>
<evidence type="ECO:0000250" key="1"/>
<evidence type="ECO:0000269" key="2">
    <source>
    </source>
</evidence>
<evidence type="ECO:0000269" key="3">
    <source>
    </source>
</evidence>
<evidence type="ECO:0000269" key="4">
    <source>
    </source>
</evidence>
<evidence type="ECO:0000269" key="5">
    <source>
    </source>
</evidence>
<evidence type="ECO:0000305" key="6"/>
<evidence type="ECO:0000305" key="7">
    <source>
    </source>
</evidence>
<evidence type="ECO:0007829" key="8">
    <source>
        <dbReference type="PDB" id="1EDZ"/>
    </source>
</evidence>
<evidence type="ECO:0007829" key="9">
    <source>
        <dbReference type="PDB" id="1EE9"/>
    </source>
</evidence>
<name>MTD1_YEAST</name>
<organism>
    <name type="scientific">Saccharomyces cerevisiae (strain ATCC 204508 / S288c)</name>
    <name type="common">Baker's yeast</name>
    <dbReference type="NCBI Taxonomy" id="559292"/>
    <lineage>
        <taxon>Eukaryota</taxon>
        <taxon>Fungi</taxon>
        <taxon>Dikarya</taxon>
        <taxon>Ascomycota</taxon>
        <taxon>Saccharomycotina</taxon>
        <taxon>Saccharomycetes</taxon>
        <taxon>Saccharomycetales</taxon>
        <taxon>Saccharomycetaceae</taxon>
        <taxon>Saccharomyces</taxon>
    </lineage>
</organism>
<gene>
    <name type="primary">MTD1</name>
    <name type="ordered locus">YKR080W</name>
    <name type="ORF">YKR400</name>
</gene>
<protein>
    <recommendedName>
        <fullName>Methylenetetrahydrofolate dehydrogenase [NAD(+)]</fullName>
        <ecNumber evidence="5">1.5.1.15</ecNumber>
    </recommendedName>
</protein>